<gene>
    <name evidence="1" type="primary">albA2</name>
    <name evidence="4" type="ORF">J5U23_02513</name>
</gene>
<reference key="1">
    <citation type="journal article" date="1996" name="Nucleic Acids Res.">
        <title>Reverse gyrase gene from Sulfolobus shibatae B12: gene structure, transcription unit and comparative sequence analysis of the two domains.</title>
        <authorList>
            <person name="Jaxel C."/>
            <person name="Bouthier de la Tour C."/>
            <person name="Duguet M."/>
            <person name="Nadal M."/>
        </authorList>
    </citation>
    <scope>NUCLEOTIDE SEQUENCE [GENOMIC DNA]</scope>
    <source>
        <strain>ATCC 51178 / DSM 5389 / JCM 8931 / NBRC 15437 / B12</strain>
    </source>
</reference>
<reference evidence="3" key="2">
    <citation type="journal article" date="2021" name="Environ. Microbiol.">
        <title>New insights into the diversity and evolution of the archaeal mobilome from three complete genomes of Saccharolobus shibatae.</title>
        <authorList>
            <person name="Medvedeva S."/>
            <person name="Brandt D."/>
            <person name="Cvirkaite-Krupovic V."/>
            <person name="Liu Y."/>
            <person name="Severinov K."/>
            <person name="Ishino S."/>
            <person name="Ishino Y."/>
            <person name="Prangishvili D."/>
            <person name="Kalinowski J."/>
            <person name="Krupovic M."/>
        </authorList>
    </citation>
    <scope>NUCLEOTIDE SEQUENCE [LARGE SCALE GENOMIC DNA]</scope>
    <source>
        <strain>ATCC 51178 / DSM 5389 / JCM 8931 / NBRC 15437 / B12</strain>
    </source>
</reference>
<feature type="chain" id="PRO_0000151710" description="DNA/RNA-binding protein Alba 2">
    <location>
        <begin position="1"/>
        <end position="89"/>
    </location>
</feature>
<feature type="modified residue" description="N6-acetyllysine" evidence="1">
    <location>
        <position position="12"/>
    </location>
</feature>
<sequence length="89" mass="10265">MTEKLNEIVVRKTKNVEDHVLDVIVLFNQGIDEVILKGIGREISKAVDVYNSLKDRLGDGIQLVNVQTGSEVRDRRRISYILLRLKRVY</sequence>
<organism>
    <name type="scientific">Saccharolobus shibatae (strain ATCC 51178 / DSM 5389 / JCM 8931 / NBRC 15437 / B12)</name>
    <name type="common">Sulfolobus shibatae</name>
    <dbReference type="NCBI Taxonomy" id="523848"/>
    <lineage>
        <taxon>Archaea</taxon>
        <taxon>Thermoproteota</taxon>
        <taxon>Thermoprotei</taxon>
        <taxon>Sulfolobales</taxon>
        <taxon>Sulfolobaceae</taxon>
        <taxon>Saccharolobus</taxon>
    </lineage>
</organism>
<keyword id="KW-0007">Acetylation</keyword>
<keyword id="KW-0158">Chromosome</keyword>
<keyword id="KW-0963">Cytoplasm</keyword>
<keyword id="KW-0226">DNA condensation</keyword>
<keyword id="KW-0238">DNA-binding</keyword>
<evidence type="ECO:0000255" key="1">
    <source>
        <dbReference type="HAMAP-Rule" id="MF_01122"/>
    </source>
</evidence>
<evidence type="ECO:0000305" key="2"/>
<evidence type="ECO:0000312" key="3">
    <source>
        <dbReference type="EMBL" id="CAA67067.1"/>
    </source>
</evidence>
<evidence type="ECO:0000312" key="4">
    <source>
        <dbReference type="EMBL" id="QXJ29640.1"/>
    </source>
</evidence>
<protein>
    <recommendedName>
        <fullName evidence="1">DNA/RNA-binding protein Alba 2</fullName>
    </recommendedName>
</protein>
<dbReference type="EMBL" id="X98420">
    <property type="protein sequence ID" value="CAA67067.1"/>
    <property type="molecule type" value="Genomic_DNA"/>
</dbReference>
<dbReference type="EMBL" id="CP077717">
    <property type="protein sequence ID" value="QXJ29640.1"/>
    <property type="molecule type" value="Genomic_DNA"/>
</dbReference>
<dbReference type="PIR" id="T29102">
    <property type="entry name" value="T29102"/>
</dbReference>
<dbReference type="RefSeq" id="WP_012711268.1">
    <property type="nucleotide sequence ID" value="NZ_CP077717.1"/>
</dbReference>
<dbReference type="BMRB" id="P74762"/>
<dbReference type="SMR" id="P74762"/>
<dbReference type="GeneID" id="84061575"/>
<dbReference type="KEGG" id="sshi:J5U23_02513"/>
<dbReference type="OrthoDB" id="10360at2157"/>
<dbReference type="Proteomes" id="UP000694018">
    <property type="component" value="Chromosome"/>
</dbReference>
<dbReference type="GO" id="GO:0005694">
    <property type="term" value="C:chromosome"/>
    <property type="evidence" value="ECO:0007669"/>
    <property type="project" value="UniProtKB-SubCell"/>
</dbReference>
<dbReference type="GO" id="GO:0005737">
    <property type="term" value="C:cytoplasm"/>
    <property type="evidence" value="ECO:0007669"/>
    <property type="project" value="UniProtKB-SubCell"/>
</dbReference>
<dbReference type="GO" id="GO:0003690">
    <property type="term" value="F:double-stranded DNA binding"/>
    <property type="evidence" value="ECO:0007669"/>
    <property type="project" value="UniProtKB-UniRule"/>
</dbReference>
<dbReference type="GO" id="GO:0003723">
    <property type="term" value="F:RNA binding"/>
    <property type="evidence" value="ECO:0007669"/>
    <property type="project" value="InterPro"/>
</dbReference>
<dbReference type="GO" id="GO:0030261">
    <property type="term" value="P:chromosome condensation"/>
    <property type="evidence" value="ECO:0007669"/>
    <property type="project" value="UniProtKB-KW"/>
</dbReference>
<dbReference type="Gene3D" id="3.30.110.20">
    <property type="entry name" value="Alba-like domain"/>
    <property type="match status" value="1"/>
</dbReference>
<dbReference type="HAMAP" id="MF_01122">
    <property type="entry name" value="AlbA"/>
    <property type="match status" value="1"/>
</dbReference>
<dbReference type="InterPro" id="IPR036882">
    <property type="entry name" value="Alba-like_dom_sf"/>
</dbReference>
<dbReference type="InterPro" id="IPR013795">
    <property type="entry name" value="DNA/RNA-bd_Alba"/>
</dbReference>
<dbReference type="InterPro" id="IPR002775">
    <property type="entry name" value="DNA/RNA-bd_Alba-like"/>
</dbReference>
<dbReference type="Pfam" id="PF01918">
    <property type="entry name" value="Alba"/>
    <property type="match status" value="1"/>
</dbReference>
<dbReference type="PIRSF" id="PIRSF028732">
    <property type="entry name" value="Alba"/>
    <property type="match status" value="1"/>
</dbReference>
<dbReference type="SUPFAM" id="SSF82704">
    <property type="entry name" value="AlbA-like"/>
    <property type="match status" value="1"/>
</dbReference>
<comment type="function">
    <text evidence="1">Binds double-stranded DNA tightly but without sequence specificity. Involved in DNA compaction.</text>
</comment>
<comment type="subcellular location">
    <subcellularLocation>
        <location evidence="1">Cytoplasm</location>
    </subcellularLocation>
    <subcellularLocation>
        <location evidence="1">Chromosome</location>
    </subcellularLocation>
</comment>
<comment type="PTM">
    <text evidence="1">Acetylated. Acetylation at Lys-12 decreases DNA-binding affinity.</text>
</comment>
<comment type="similarity">
    <text evidence="1 2">Belongs to the histone-like Alba family.</text>
</comment>
<name>ALBA2_SACSH</name>
<proteinExistence type="inferred from homology"/>
<accession>P74762</accession>
<accession>A0A8F5GU72</accession>